<gene>
    <name evidence="8" type="ORF">AAEL010950</name>
</gene>
<accession>Q16RI5</accession>
<dbReference type="EMBL" id="CH477709">
    <property type="protein sequence ID" value="EAT37004.1"/>
    <property type="status" value="ALT_INIT"/>
    <property type="molecule type" value="Genomic_DNA"/>
</dbReference>
<dbReference type="RefSeq" id="XP_001661197.1">
    <property type="nucleotide sequence ID" value="XM_001661147.1"/>
</dbReference>
<dbReference type="STRING" id="7159.Q16RI5"/>
<dbReference type="PaxDb" id="7159-AAEL010950-PB"/>
<dbReference type="VEuPathDB" id="VectorBase:AAEL010950"/>
<dbReference type="eggNOG" id="ENOG502T1FA">
    <property type="taxonomic scope" value="Eukaryota"/>
</dbReference>
<dbReference type="InParanoid" id="Q16RI5"/>
<dbReference type="PhylomeDB" id="Q16RI5"/>
<dbReference type="Proteomes" id="UP000008820">
    <property type="component" value="Unplaced"/>
</dbReference>
<dbReference type="Proteomes" id="UP000682892">
    <property type="component" value="Unassembled WGS sequence"/>
</dbReference>
<dbReference type="GO" id="GO:0005576">
    <property type="term" value="C:extracellular region"/>
    <property type="evidence" value="ECO:0007669"/>
    <property type="project" value="UniProtKB-SubCell"/>
</dbReference>
<dbReference type="GO" id="GO:0005179">
    <property type="term" value="F:hormone activity"/>
    <property type="evidence" value="ECO:0007669"/>
    <property type="project" value="UniProtKB-KW"/>
</dbReference>
<dbReference type="GO" id="GO:0007218">
    <property type="term" value="P:neuropeptide signaling pathway"/>
    <property type="evidence" value="ECO:0007669"/>
    <property type="project" value="UniProtKB-KW"/>
</dbReference>
<dbReference type="InterPro" id="IPR002047">
    <property type="entry name" value="Adipokinetic_hormone_CS"/>
</dbReference>
<dbReference type="InterPro" id="IPR010475">
    <property type="entry name" value="AKH/RPCH_hormone"/>
</dbReference>
<dbReference type="Pfam" id="PF06377">
    <property type="entry name" value="Adipokin_hormo"/>
    <property type="match status" value="1"/>
</dbReference>
<dbReference type="PROSITE" id="PS00256">
    <property type="entry name" value="AKH"/>
    <property type="match status" value="1"/>
</dbReference>
<proteinExistence type="evidence at protein level"/>
<reference key="1">
    <citation type="journal article" date="2007" name="Science">
        <title>Genome sequence of Aedes aegypti, a major arbovirus vector.</title>
        <authorList>
            <person name="Nene V."/>
            <person name="Wortman J.R."/>
            <person name="Lawson D."/>
            <person name="Haas B.J."/>
            <person name="Kodira C.D."/>
            <person name="Tu Z.J."/>
            <person name="Loftus B.J."/>
            <person name="Xi Z."/>
            <person name="Megy K."/>
            <person name="Grabherr M."/>
            <person name="Ren Q."/>
            <person name="Zdobnov E.M."/>
            <person name="Lobo N.F."/>
            <person name="Campbell K.S."/>
            <person name="Brown S.E."/>
            <person name="Bonaldo M.F."/>
            <person name="Zhu J."/>
            <person name="Sinkins S.P."/>
            <person name="Hogenkamp D.G."/>
            <person name="Amedeo P."/>
            <person name="Arensburger P."/>
            <person name="Atkinson P.W."/>
            <person name="Bidwell S.L."/>
            <person name="Biedler J."/>
            <person name="Birney E."/>
            <person name="Bruggner R.V."/>
            <person name="Costas J."/>
            <person name="Coy M.R."/>
            <person name="Crabtree J."/>
            <person name="Crawford M."/>
            <person name="DeBruyn B."/>
            <person name="DeCaprio D."/>
            <person name="Eiglmeier K."/>
            <person name="Eisenstadt E."/>
            <person name="El-Dorry H."/>
            <person name="Gelbart W.M."/>
            <person name="Gomes S.L."/>
            <person name="Hammond M."/>
            <person name="Hannick L.I."/>
            <person name="Hogan J.R."/>
            <person name="Holmes M.H."/>
            <person name="Jaffe D."/>
            <person name="Johnston S.J."/>
            <person name="Kennedy R.C."/>
            <person name="Koo H."/>
            <person name="Kravitz S."/>
            <person name="Kriventseva E.V."/>
            <person name="Kulp D."/>
            <person name="Labutti K."/>
            <person name="Lee E."/>
            <person name="Li S."/>
            <person name="Lovin D.D."/>
            <person name="Mao C."/>
            <person name="Mauceli E."/>
            <person name="Menck C.F."/>
            <person name="Miller J.R."/>
            <person name="Montgomery P."/>
            <person name="Mori A."/>
            <person name="Nascimento A.L."/>
            <person name="Naveira H.F."/>
            <person name="Nusbaum C."/>
            <person name="O'Leary S.B."/>
            <person name="Orvis J."/>
            <person name="Pertea M."/>
            <person name="Quesneville H."/>
            <person name="Reidenbach K.R."/>
            <person name="Rogers Y.-H.C."/>
            <person name="Roth C.W."/>
            <person name="Schneider J.R."/>
            <person name="Schatz M."/>
            <person name="Shumway M."/>
            <person name="Stanke M."/>
            <person name="Stinson E.O."/>
            <person name="Tubio J.M.C."/>
            <person name="Vanzee J.P."/>
            <person name="Verjovski-Almeida S."/>
            <person name="Werner D."/>
            <person name="White O.R."/>
            <person name="Wyder S."/>
            <person name="Zeng Q."/>
            <person name="Zhao Q."/>
            <person name="Zhao Y."/>
            <person name="Hill C.A."/>
            <person name="Raikhel A.S."/>
            <person name="Soares M.B."/>
            <person name="Knudson D.L."/>
            <person name="Lee N.H."/>
            <person name="Galagan J."/>
            <person name="Salzberg S.L."/>
            <person name="Paulsen I.T."/>
            <person name="Dimopoulos G."/>
            <person name="Collins F.H."/>
            <person name="Bruce B."/>
            <person name="Fraser-Liggett C.M."/>
            <person name="Severson D.W."/>
        </authorList>
    </citation>
    <scope>NUCLEOTIDE SEQUENCE [LARGE SCALE GENOMIC DNA]</scope>
    <source>
        <strain>Liverpool</strain>
    </source>
</reference>
<reference key="2">
    <citation type="journal article" date="2010" name="J. Biol. Chem.">
        <title>Discovery of a novel insect neuropeptide signaling system closely related to the insect adipokinetic hormone and corazonin hormonal systems.</title>
        <authorList>
            <person name="Hansen K.K."/>
            <person name="Stafflinger E."/>
            <person name="Schneider M."/>
            <person name="Hauser F."/>
            <person name="Cazzamali G."/>
            <person name="Williamson M."/>
            <person name="Kollmann M."/>
            <person name="Schachtner J."/>
            <person name="Grimmelikhuijzen C.J."/>
        </authorList>
    </citation>
    <scope>FUNCTION</scope>
    <scope>PYROGLUTAMATE FORMATION AT GLN-26</scope>
    <scope>AMIDATION AT ALA-35</scope>
    <scope>SUBCELLULAR LOCATION</scope>
</reference>
<reference key="3">
    <citation type="journal article" date="2018" name="Sci. Rep.">
        <title>Molecular identification, transcript expression, and functional deorphanization of the adipokinetic hormone/corazonin-related peptide receptor in the disease vector, Aedes aegypti.</title>
        <authorList>
            <person name="Wahedi A."/>
            <person name="Paluzzi J.P."/>
        </authorList>
    </citation>
    <scope>PROBABLE FUNCTION</scope>
    <scope>TISSUE SPECIFICITY</scope>
    <scope>DEVELOPMENTAL STAGE</scope>
</reference>
<evidence type="ECO:0000255" key="1"/>
<evidence type="ECO:0000269" key="2">
    <source>
    </source>
</evidence>
<evidence type="ECO:0000303" key="3">
    <source>
    </source>
</evidence>
<evidence type="ECO:0000303" key="4">
    <source>
    </source>
</evidence>
<evidence type="ECO:0000305" key="5"/>
<evidence type="ECO:0000305" key="6">
    <source>
    </source>
</evidence>
<evidence type="ECO:0000305" key="7">
    <source>
    </source>
</evidence>
<evidence type="ECO:0000312" key="8">
    <source>
        <dbReference type="EMBL" id="EAT37004.1"/>
    </source>
</evidence>
<sequence>MRNSIYKLIMFAVLCMVLTSSLSYAQVTFSRDWNAGKRSLAEAAQSTGDCAAIWRSVTNLCAAVTKNIQHLTMCEARALMKNLQSEDASMENNGGGGLPLFSNGHL</sequence>
<organism>
    <name type="scientific">Aedes aegypti</name>
    <name type="common">Yellowfever mosquito</name>
    <name type="synonym">Culex aegypti</name>
    <dbReference type="NCBI Taxonomy" id="7159"/>
    <lineage>
        <taxon>Eukaryota</taxon>
        <taxon>Metazoa</taxon>
        <taxon>Ecdysozoa</taxon>
        <taxon>Arthropoda</taxon>
        <taxon>Hexapoda</taxon>
        <taxon>Insecta</taxon>
        <taxon>Pterygota</taxon>
        <taxon>Neoptera</taxon>
        <taxon>Endopterygota</taxon>
        <taxon>Diptera</taxon>
        <taxon>Nematocera</taxon>
        <taxon>Culicoidea</taxon>
        <taxon>Culicidae</taxon>
        <taxon>Culicinae</taxon>
        <taxon>Aedini</taxon>
        <taxon>Aedes</taxon>
        <taxon>Stegomyia</taxon>
    </lineage>
</organism>
<comment type="function">
    <text evidence="6 7">Neuropeptide with neuromodulator or neurotransmitter role that activates the adipokinetic hormone/corazonin-related peptide receptor (ACPR) (Probable). May function in regulation of post-ecdysis activities (Probable). Does not activate the A.gambiae adipokinetic hormone (AKH) and corazonin (CRZ) receptors (Probable).</text>
</comment>
<comment type="subcellular location">
    <subcellularLocation>
        <location evidence="6">Secreted</location>
    </subcellularLocation>
</comment>
<comment type="tissue specificity">
    <text evidence="2">Only expressed in the head and thorax body segments of adults. Is more expressed in adult males than in females.</text>
</comment>
<comment type="developmental stage">
    <text evidence="2">Much more expressed in adults than in larvae.</text>
</comment>
<comment type="similarity">
    <text evidence="5">Belongs to the AKH/HRTH/RPCH family.</text>
</comment>
<comment type="sequence caution" evidence="5">
    <conflict type="erroneous initiation">
        <sequence resource="EMBL-CDS" id="EAT37004"/>
    </conflict>
    <text>Truncated N-terminus.</text>
</comment>
<keyword id="KW-0027">Amidation</keyword>
<keyword id="KW-0165">Cleavage on pair of basic residues</keyword>
<keyword id="KW-0372">Hormone</keyword>
<keyword id="KW-0527">Neuropeptide</keyword>
<keyword id="KW-0873">Pyrrolidone carboxylic acid</keyword>
<keyword id="KW-1185">Reference proteome</keyword>
<keyword id="KW-0964">Secreted</keyword>
<keyword id="KW-0732">Signal</keyword>
<name>ACP_AEDAE</name>
<protein>
    <recommendedName>
        <fullName evidence="4">Adipokinetic hormone/corazonin-related peptide</fullName>
        <shortName evidence="4">ACP</shortName>
        <shortName evidence="3">AKH/CRZ-related peptide</shortName>
    </recommendedName>
</protein>
<feature type="signal peptide" evidence="1">
    <location>
        <begin position="1"/>
        <end position="25"/>
    </location>
</feature>
<feature type="peptide" id="PRO_5004184941" description="Adipokinetic hormone/corazonin-related peptide" evidence="6">
    <location>
        <begin position="26"/>
        <end position="35"/>
    </location>
</feature>
<feature type="propeptide" id="PRO_0000453424" evidence="5">
    <location>
        <begin position="39"/>
        <end position="106"/>
    </location>
</feature>
<feature type="site" description="Cleavage by prohormone convertase" evidence="6">
    <location>
        <begin position="38"/>
        <end position="39"/>
    </location>
</feature>
<feature type="modified residue" description="Pyrrolidone carboxylic acid" evidence="6">
    <location>
        <position position="26"/>
    </location>
</feature>
<feature type="modified residue" description="Alanine amide" evidence="6">
    <location>
        <position position="35"/>
    </location>
</feature>